<accession>B2RL46</accession>
<feature type="chain" id="PRO_1000121470" description="Large ribosomal subunit protein bL12">
    <location>
        <begin position="1"/>
        <end position="125"/>
    </location>
</feature>
<organism>
    <name type="scientific">Porphyromonas gingivalis (strain ATCC 33277 / DSM 20709 / CIP 103683 / JCM 12257 / NCTC 11834 / 2561)</name>
    <dbReference type="NCBI Taxonomy" id="431947"/>
    <lineage>
        <taxon>Bacteria</taxon>
        <taxon>Pseudomonadati</taxon>
        <taxon>Bacteroidota</taxon>
        <taxon>Bacteroidia</taxon>
        <taxon>Bacteroidales</taxon>
        <taxon>Porphyromonadaceae</taxon>
        <taxon>Porphyromonas</taxon>
    </lineage>
</organism>
<sequence length="125" mass="12687">MADIKAIAEQLVNLTVKEVSELATILKEEYGIEPAAAAVAVAAAPGAAGAAAEEEKTSFDVVLKSAGAAKLQVVKAVKEQCGLGLKEAKDLVDAAPSTVKEGVDKATAEALKKALEEAGAEVELK</sequence>
<gene>
    <name evidence="1" type="primary">rplL</name>
    <name type="ordered locus">PGN_1572</name>
</gene>
<dbReference type="EMBL" id="AP009380">
    <property type="protein sequence ID" value="BAG34091.1"/>
    <property type="molecule type" value="Genomic_DNA"/>
</dbReference>
<dbReference type="RefSeq" id="WP_010956001.1">
    <property type="nucleotide sequence ID" value="NZ_CP025930.1"/>
</dbReference>
<dbReference type="SMR" id="B2RL46"/>
<dbReference type="GeneID" id="29256746"/>
<dbReference type="KEGG" id="pgn:PGN_1572"/>
<dbReference type="eggNOG" id="COG0222">
    <property type="taxonomic scope" value="Bacteria"/>
</dbReference>
<dbReference type="HOGENOM" id="CLU_086499_3_1_10"/>
<dbReference type="OrthoDB" id="9811748at2"/>
<dbReference type="BioCyc" id="PGIN431947:G1G2V-1772-MONOMER"/>
<dbReference type="Proteomes" id="UP000008842">
    <property type="component" value="Chromosome"/>
</dbReference>
<dbReference type="GO" id="GO:0022625">
    <property type="term" value="C:cytosolic large ribosomal subunit"/>
    <property type="evidence" value="ECO:0007669"/>
    <property type="project" value="TreeGrafter"/>
</dbReference>
<dbReference type="GO" id="GO:0003729">
    <property type="term" value="F:mRNA binding"/>
    <property type="evidence" value="ECO:0007669"/>
    <property type="project" value="TreeGrafter"/>
</dbReference>
<dbReference type="GO" id="GO:0003735">
    <property type="term" value="F:structural constituent of ribosome"/>
    <property type="evidence" value="ECO:0007669"/>
    <property type="project" value="InterPro"/>
</dbReference>
<dbReference type="GO" id="GO:0006412">
    <property type="term" value="P:translation"/>
    <property type="evidence" value="ECO:0007669"/>
    <property type="project" value="UniProtKB-UniRule"/>
</dbReference>
<dbReference type="CDD" id="cd00387">
    <property type="entry name" value="Ribosomal_L7_L12"/>
    <property type="match status" value="1"/>
</dbReference>
<dbReference type="FunFam" id="3.30.1390.10:FF:000001">
    <property type="entry name" value="50S ribosomal protein L7/L12"/>
    <property type="match status" value="1"/>
</dbReference>
<dbReference type="Gene3D" id="3.30.1390.10">
    <property type="match status" value="1"/>
</dbReference>
<dbReference type="Gene3D" id="1.20.5.710">
    <property type="entry name" value="Single helix bin"/>
    <property type="match status" value="1"/>
</dbReference>
<dbReference type="HAMAP" id="MF_00368">
    <property type="entry name" value="Ribosomal_bL12"/>
    <property type="match status" value="1"/>
</dbReference>
<dbReference type="InterPro" id="IPR000206">
    <property type="entry name" value="Ribosomal_bL12"/>
</dbReference>
<dbReference type="InterPro" id="IPR013823">
    <property type="entry name" value="Ribosomal_bL12_C"/>
</dbReference>
<dbReference type="InterPro" id="IPR014719">
    <property type="entry name" value="Ribosomal_bL12_C/ClpS-like"/>
</dbReference>
<dbReference type="InterPro" id="IPR008932">
    <property type="entry name" value="Ribosomal_bL12_oligo"/>
</dbReference>
<dbReference type="InterPro" id="IPR036235">
    <property type="entry name" value="Ribosomal_bL12_oligo_N_sf"/>
</dbReference>
<dbReference type="NCBIfam" id="TIGR00855">
    <property type="entry name" value="L12"/>
    <property type="match status" value="1"/>
</dbReference>
<dbReference type="PANTHER" id="PTHR45987">
    <property type="entry name" value="39S RIBOSOMAL PROTEIN L12"/>
    <property type="match status" value="1"/>
</dbReference>
<dbReference type="PANTHER" id="PTHR45987:SF4">
    <property type="entry name" value="LARGE RIBOSOMAL SUBUNIT PROTEIN BL12M"/>
    <property type="match status" value="1"/>
</dbReference>
<dbReference type="Pfam" id="PF00542">
    <property type="entry name" value="Ribosomal_L12"/>
    <property type="match status" value="1"/>
</dbReference>
<dbReference type="Pfam" id="PF16320">
    <property type="entry name" value="Ribosomal_L12_N"/>
    <property type="match status" value="1"/>
</dbReference>
<dbReference type="SUPFAM" id="SSF54736">
    <property type="entry name" value="ClpS-like"/>
    <property type="match status" value="1"/>
</dbReference>
<dbReference type="SUPFAM" id="SSF48300">
    <property type="entry name" value="Ribosomal protein L7/12, oligomerisation (N-terminal) domain"/>
    <property type="match status" value="1"/>
</dbReference>
<keyword id="KW-0687">Ribonucleoprotein</keyword>
<keyword id="KW-0689">Ribosomal protein</keyword>
<reference key="1">
    <citation type="journal article" date="2008" name="DNA Res.">
        <title>Determination of the genome sequence of Porphyromonas gingivalis strain ATCC 33277 and genomic comparison with strain W83 revealed extensive genome rearrangements in P. gingivalis.</title>
        <authorList>
            <person name="Naito M."/>
            <person name="Hirakawa H."/>
            <person name="Yamashita A."/>
            <person name="Ohara N."/>
            <person name="Shoji M."/>
            <person name="Yukitake H."/>
            <person name="Nakayama K."/>
            <person name="Toh H."/>
            <person name="Yoshimura F."/>
            <person name="Kuhara S."/>
            <person name="Hattori M."/>
            <person name="Hayashi T."/>
            <person name="Nakayama K."/>
        </authorList>
    </citation>
    <scope>NUCLEOTIDE SEQUENCE [LARGE SCALE GENOMIC DNA]</scope>
    <source>
        <strain>ATCC 33277 / DSM 20709 / CIP 103683 / JCM 12257 / NCTC 11834 / 2561</strain>
    </source>
</reference>
<protein>
    <recommendedName>
        <fullName evidence="1">Large ribosomal subunit protein bL12</fullName>
    </recommendedName>
    <alternativeName>
        <fullName evidence="2">50S ribosomal protein L7/L12</fullName>
    </alternativeName>
</protein>
<comment type="function">
    <text evidence="1">Forms part of the ribosomal stalk which helps the ribosome interact with GTP-bound translation factors. Is thus essential for accurate translation.</text>
</comment>
<comment type="subunit">
    <text evidence="1">Homodimer. Part of the ribosomal stalk of the 50S ribosomal subunit. Forms a multimeric L10(L12)X complex, where L10 forms an elongated spine to which 2 to 4 L12 dimers bind in a sequential fashion. Binds GTP-bound translation factors.</text>
</comment>
<comment type="similarity">
    <text evidence="1">Belongs to the bacterial ribosomal protein bL12 family.</text>
</comment>
<evidence type="ECO:0000255" key="1">
    <source>
        <dbReference type="HAMAP-Rule" id="MF_00368"/>
    </source>
</evidence>
<evidence type="ECO:0000305" key="2"/>
<name>RL7_PORG3</name>
<proteinExistence type="inferred from homology"/>